<name>HIS6_DESRM</name>
<proteinExistence type="inferred from homology"/>
<accession>A4J707</accession>
<comment type="function">
    <text evidence="1">IGPS catalyzes the conversion of PRFAR and glutamine to IGP, AICAR and glutamate. The HisF subunit catalyzes the cyclization activity that produces IGP and AICAR from PRFAR using the ammonia provided by the HisH subunit.</text>
</comment>
<comment type="catalytic activity">
    <reaction evidence="1">
        <text>5-[(5-phospho-1-deoxy-D-ribulos-1-ylimino)methylamino]-1-(5-phospho-beta-D-ribosyl)imidazole-4-carboxamide + L-glutamine = D-erythro-1-(imidazol-4-yl)glycerol 3-phosphate + 5-amino-1-(5-phospho-beta-D-ribosyl)imidazole-4-carboxamide + L-glutamate + H(+)</text>
        <dbReference type="Rhea" id="RHEA:24793"/>
        <dbReference type="ChEBI" id="CHEBI:15378"/>
        <dbReference type="ChEBI" id="CHEBI:29985"/>
        <dbReference type="ChEBI" id="CHEBI:58278"/>
        <dbReference type="ChEBI" id="CHEBI:58359"/>
        <dbReference type="ChEBI" id="CHEBI:58475"/>
        <dbReference type="ChEBI" id="CHEBI:58525"/>
        <dbReference type="EC" id="4.3.2.10"/>
    </reaction>
</comment>
<comment type="pathway">
    <text evidence="1">Amino-acid biosynthesis; L-histidine biosynthesis; L-histidine from 5-phospho-alpha-D-ribose 1-diphosphate: step 5/9.</text>
</comment>
<comment type="subunit">
    <text evidence="1">Heterodimer of HisH and HisF.</text>
</comment>
<comment type="subcellular location">
    <subcellularLocation>
        <location evidence="1">Cytoplasm</location>
    </subcellularLocation>
</comment>
<comment type="similarity">
    <text evidence="1">Belongs to the HisA/HisF family.</text>
</comment>
<protein>
    <recommendedName>
        <fullName evidence="1">Imidazole glycerol phosphate synthase subunit HisF</fullName>
        <ecNumber evidence="1">4.3.2.10</ecNumber>
    </recommendedName>
    <alternativeName>
        <fullName evidence="1">IGP synthase cyclase subunit</fullName>
    </alternativeName>
    <alternativeName>
        <fullName evidence="1">IGP synthase subunit HisF</fullName>
    </alternativeName>
    <alternativeName>
        <fullName evidence="1">ImGP synthase subunit HisF</fullName>
        <shortName evidence="1">IGPS subunit HisF</shortName>
    </alternativeName>
</protein>
<keyword id="KW-0028">Amino-acid biosynthesis</keyword>
<keyword id="KW-0963">Cytoplasm</keyword>
<keyword id="KW-0368">Histidine biosynthesis</keyword>
<keyword id="KW-0456">Lyase</keyword>
<keyword id="KW-1185">Reference proteome</keyword>
<evidence type="ECO:0000255" key="1">
    <source>
        <dbReference type="HAMAP-Rule" id="MF_01013"/>
    </source>
</evidence>
<organism>
    <name type="scientific">Desulforamulus reducens (strain ATCC BAA-1160 / DSM 100696 / MI-1)</name>
    <name type="common">Desulfotomaculum reducens</name>
    <dbReference type="NCBI Taxonomy" id="349161"/>
    <lineage>
        <taxon>Bacteria</taxon>
        <taxon>Bacillati</taxon>
        <taxon>Bacillota</taxon>
        <taxon>Clostridia</taxon>
        <taxon>Eubacteriales</taxon>
        <taxon>Peptococcaceae</taxon>
        <taxon>Desulforamulus</taxon>
    </lineage>
</organism>
<sequence>MLMKRVIPCLDVTAGRVVKGTNFVNLRDAGDPVELAAFYDKEGADELVFLDITASSDGRVTMLDVVRRTAEEVFIPFTVGGGIRTVDDMRLMLKAGADKIGINTAAIKNPRLISEGAIKFGSQCIVVAMDARQVASEKWEVYIHGGRTSTGLDAVEWALKAEELGAGEILLTSMDRDGTKEGFDLALTRTIAQHVKIPVIASGGVGNLEHMARGLTDGMADAALAASIFHFGEYTIRQAKEYLMEQGIPVRL</sequence>
<gene>
    <name evidence="1" type="primary">hisF</name>
    <name type="ordered locus">Dred_2350</name>
</gene>
<reference key="1">
    <citation type="submission" date="2007-03" db="EMBL/GenBank/DDBJ databases">
        <title>Complete sequence of Desulfotomaculum reducens MI-1.</title>
        <authorList>
            <consortium name="US DOE Joint Genome Institute"/>
            <person name="Copeland A."/>
            <person name="Lucas S."/>
            <person name="Lapidus A."/>
            <person name="Barry K."/>
            <person name="Detter J.C."/>
            <person name="Glavina del Rio T."/>
            <person name="Hammon N."/>
            <person name="Israni S."/>
            <person name="Dalin E."/>
            <person name="Tice H."/>
            <person name="Pitluck S."/>
            <person name="Sims D."/>
            <person name="Brettin T."/>
            <person name="Bruce D."/>
            <person name="Han C."/>
            <person name="Tapia R."/>
            <person name="Schmutz J."/>
            <person name="Larimer F."/>
            <person name="Land M."/>
            <person name="Hauser L."/>
            <person name="Kyrpides N."/>
            <person name="Kim E."/>
            <person name="Tebo B.M."/>
            <person name="Richardson P."/>
        </authorList>
    </citation>
    <scope>NUCLEOTIDE SEQUENCE [LARGE SCALE GENOMIC DNA]</scope>
    <source>
        <strain>ATCC BAA-1160 / DSM 100696 / MI-1</strain>
    </source>
</reference>
<feature type="chain" id="PRO_1000072924" description="Imidazole glycerol phosphate synthase subunit HisF">
    <location>
        <begin position="1"/>
        <end position="252"/>
    </location>
</feature>
<feature type="active site" evidence="1">
    <location>
        <position position="11"/>
    </location>
</feature>
<feature type="active site" evidence="1">
    <location>
        <position position="130"/>
    </location>
</feature>
<dbReference type="EC" id="4.3.2.10" evidence="1"/>
<dbReference type="EMBL" id="CP000612">
    <property type="protein sequence ID" value="ABO50860.1"/>
    <property type="molecule type" value="Genomic_DNA"/>
</dbReference>
<dbReference type="RefSeq" id="WP_011878658.1">
    <property type="nucleotide sequence ID" value="NC_009253.1"/>
</dbReference>
<dbReference type="SMR" id="A4J707"/>
<dbReference type="STRING" id="349161.Dred_2350"/>
<dbReference type="KEGG" id="drm:Dred_2350"/>
<dbReference type="eggNOG" id="COG0107">
    <property type="taxonomic scope" value="Bacteria"/>
</dbReference>
<dbReference type="HOGENOM" id="CLU_048577_4_0_9"/>
<dbReference type="OrthoDB" id="9781903at2"/>
<dbReference type="UniPathway" id="UPA00031">
    <property type="reaction ID" value="UER00010"/>
</dbReference>
<dbReference type="Proteomes" id="UP000001556">
    <property type="component" value="Chromosome"/>
</dbReference>
<dbReference type="GO" id="GO:0005737">
    <property type="term" value="C:cytoplasm"/>
    <property type="evidence" value="ECO:0007669"/>
    <property type="project" value="UniProtKB-SubCell"/>
</dbReference>
<dbReference type="GO" id="GO:0000107">
    <property type="term" value="F:imidazoleglycerol-phosphate synthase activity"/>
    <property type="evidence" value="ECO:0007669"/>
    <property type="project" value="UniProtKB-UniRule"/>
</dbReference>
<dbReference type="GO" id="GO:0016829">
    <property type="term" value="F:lyase activity"/>
    <property type="evidence" value="ECO:0007669"/>
    <property type="project" value="UniProtKB-KW"/>
</dbReference>
<dbReference type="GO" id="GO:0000105">
    <property type="term" value="P:L-histidine biosynthetic process"/>
    <property type="evidence" value="ECO:0007669"/>
    <property type="project" value="UniProtKB-UniRule"/>
</dbReference>
<dbReference type="CDD" id="cd04731">
    <property type="entry name" value="HisF"/>
    <property type="match status" value="1"/>
</dbReference>
<dbReference type="FunFam" id="3.20.20.70:FF:000006">
    <property type="entry name" value="Imidazole glycerol phosphate synthase subunit HisF"/>
    <property type="match status" value="1"/>
</dbReference>
<dbReference type="Gene3D" id="3.20.20.70">
    <property type="entry name" value="Aldolase class I"/>
    <property type="match status" value="1"/>
</dbReference>
<dbReference type="HAMAP" id="MF_01013">
    <property type="entry name" value="HisF"/>
    <property type="match status" value="1"/>
</dbReference>
<dbReference type="InterPro" id="IPR013785">
    <property type="entry name" value="Aldolase_TIM"/>
</dbReference>
<dbReference type="InterPro" id="IPR006062">
    <property type="entry name" value="His_biosynth"/>
</dbReference>
<dbReference type="InterPro" id="IPR004651">
    <property type="entry name" value="HisF"/>
</dbReference>
<dbReference type="InterPro" id="IPR050064">
    <property type="entry name" value="IGPS_HisA/HisF"/>
</dbReference>
<dbReference type="InterPro" id="IPR011060">
    <property type="entry name" value="RibuloseP-bd_barrel"/>
</dbReference>
<dbReference type="NCBIfam" id="TIGR00735">
    <property type="entry name" value="hisF"/>
    <property type="match status" value="1"/>
</dbReference>
<dbReference type="PANTHER" id="PTHR21235:SF2">
    <property type="entry name" value="IMIDAZOLE GLYCEROL PHOSPHATE SYNTHASE HISHF"/>
    <property type="match status" value="1"/>
</dbReference>
<dbReference type="PANTHER" id="PTHR21235">
    <property type="entry name" value="IMIDAZOLE GLYCEROL PHOSPHATE SYNTHASE SUBUNIT HISF/H IGP SYNTHASE SUBUNIT HISF/H"/>
    <property type="match status" value="1"/>
</dbReference>
<dbReference type="Pfam" id="PF00977">
    <property type="entry name" value="His_biosynth"/>
    <property type="match status" value="1"/>
</dbReference>
<dbReference type="SUPFAM" id="SSF51366">
    <property type="entry name" value="Ribulose-phoshate binding barrel"/>
    <property type="match status" value="1"/>
</dbReference>